<gene>
    <name evidence="9 11" type="primary">Rrp1</name>
    <name evidence="11" type="ORF">CG3178</name>
</gene>
<comment type="function">
    <text evidence="2 5 6 8">Plays a role in the cellular response to oxidative stress by promoting DNA repair mechanisms such as base excision repair and possibly homologous recombination repair (PubMed:16507570, PubMed:1713691). Functions as an apurinic/apyrimidinic (AP) endodeoxyribonuclease in the DNA base excision repair (BER) pathway of DNA lesions induced by oxidative and alkylating agents (PubMed:16507570). Likely to initiate repair of AP sites in DNA by catalyzing hydrolytic incision of the phosphodiester backbone immediately adjacent to the damage, generating a single-strand break with 5'-deoxyribose phosphate and 3'-hydroxyl ends (By similarity). Has a 3'-5' exoribonuclease activity on mismatched deoxyribonucleotides at the 3' termini of nicked or gapped DNA molecules during short-patch BER (PubMed:16507570). Has apurinic endonuclease and double-stranded DNA 3'-exonuclease activities and carries out single-stranded DNA renaturation in a Mg(2+)-dependent manner (PubMed:1713691, PubMed:8918793). Activity is more efficient in purine-rich regions of dsDNA than in pyrimidine-rich regions (PubMed:8918793).</text>
</comment>
<comment type="catalytic activity">
    <reaction evidence="5 6 8">
        <text>Exonucleolytic cleavage in the 3'- to 5'-direction to yield nucleoside 5'-phosphates.</text>
        <dbReference type="EC" id="3.1.11.2"/>
    </reaction>
</comment>
<comment type="cofactor">
    <cofactor evidence="5 6 8">
        <name>Mg(2+)</name>
        <dbReference type="ChEBI" id="CHEBI:18420"/>
    </cofactor>
    <cofactor evidence="2">
        <name>Mn(2+)</name>
        <dbReference type="ChEBI" id="CHEBI:29035"/>
    </cofactor>
    <text evidence="2">Probably binds two magnesium or manganese ions per subunit.</text>
</comment>
<comment type="subunit">
    <text evidence="5">Interacts with the zeta DNA polymerase complex; interacts (via the N-terminus) with the accessory subunit PolZ2/Rev7 and also interacts with the catalytic component PolZ1, however the interaction with PolZ1 is likely via PolZ2.</text>
</comment>
<comment type="subcellular location">
    <subcellularLocation>
        <location evidence="3 6 8">Nucleus</location>
    </subcellularLocation>
</comment>
<comment type="developmental stage">
    <text evidence="5">Expressed throughout development, with slightly higher levels of expression in 0-12 hour embryos and adult females.</text>
</comment>
<comment type="similarity">
    <text evidence="10">Belongs to the DNA repair enzymes AP/ExoA family.</text>
</comment>
<sequence>MPRVKAVKKQAEALASEPTDPTPNANGNGVDENADSAAEELKVPAKGKPRARKATKTAVSAENSEEVEPQKAPTAAARGKKKQPKDTDENGQMEVVAKPKGRAKKATAEAEPEPKVDLPAGKATKPRAKKEPTPAPDEVTSSPPKGRAKAEKPTNAQAKGRKRKELPAEANGGAEEAAEPPKQRARKEAVPTLKEQAEPGTISKEKVQKAETAAKRARGTKRLADSEIAAALDEPEVDEVPPKAASKRAKKGKMVEPSPETVGDFQSVQEEVESPPKTAAAPKKRAKKTTNGETAVELEPKTKAKPTKQRAKKEGKEPAPGKKQKKSADKENGVVEEEAKPSTETKPAKGRKKAPVKAEDVEDIEEAAEESKPARGRKKAAAKAEEPDVDEESGSKTTKKAKKAETKTTVTLDKDAFALPADKEFNLKICSWNVAGLRAWLKKDGLQLIDLEEPDIFCLQETKCANDQLPEEVTRLPGYHPYWLCMPGGYAGVAIYSKIMPIHVEYGIGNEEFDDVGRMITAEYEKFYLINVYVPNSGRKLVNLEPRMRWEKLFQAYVKKLDALKPVVICGDMNVSHMPIDLENPKNNTKNAGFTQEERDKMTELLGLGFVDTFRHLYPDRKGAYTFWTYMANARARNVGWRLDYCLVSERFVPKVVEHEIRSQCLGSDHCPITIFFNI</sequence>
<reference key="1">
    <citation type="journal article" date="1991" name="Proc. Natl. Acad. Sci. U.S.A.">
        <title>Drosophila Rrp1 protein: an apurinic endonuclease with homologous recombination activities.</title>
        <authorList>
            <person name="Sander M."/>
            <person name="Lowenhaupt K."/>
            <person name="Rich A."/>
        </authorList>
    </citation>
    <scope>NUCLEOTIDE SEQUENCE [MRNA]</scope>
    <scope>FUNCTION</scope>
    <scope>CATALYTIC ACTIVITY</scope>
    <scope>COFACTOR</scope>
    <scope>SUBCELLULAR LOCATION</scope>
    <source>
        <strain>Oregon-R</strain>
    </source>
</reference>
<reference key="2">
    <citation type="journal article" date="1991" name="Nucleic Acids Res.">
        <title>Cloning and characterization of Rrp1, the gene encoding Drosophila strand transferase: carboxy-terminal homology to DNA repair endo/exonucleases.</title>
        <authorList>
            <person name="Sander M."/>
            <person name="Lowenhaupt K."/>
            <person name="Lane W.S."/>
            <person name="Rich A."/>
        </authorList>
    </citation>
    <scope>NUCLEOTIDE SEQUENCE [MRNA]</scope>
    <source>
        <strain>Oregon-R</strain>
    </source>
</reference>
<reference key="3">
    <citation type="submission" date="1998-06" db="EMBL/GenBank/DDBJ databases">
        <title>Genomic organization of the Drosophila 23C genetic interval: identification of 3 genes in the 10Kb region surrounding the RRP1 gene.</title>
        <authorList>
            <person name="Tsoi S.C.M."/>
            <person name="Huang S.M."/>
            <person name="Sander M."/>
        </authorList>
    </citation>
    <scope>NUCLEOTIDE SEQUENCE [GENOMIC DNA]</scope>
    <source>
        <strain>Canton-S</strain>
    </source>
</reference>
<reference key="4">
    <citation type="journal article" date="2000" name="Science">
        <title>The genome sequence of Drosophila melanogaster.</title>
        <authorList>
            <person name="Adams M.D."/>
            <person name="Celniker S.E."/>
            <person name="Holt R.A."/>
            <person name="Evans C.A."/>
            <person name="Gocayne J.D."/>
            <person name="Amanatides P.G."/>
            <person name="Scherer S.E."/>
            <person name="Li P.W."/>
            <person name="Hoskins R.A."/>
            <person name="Galle R.F."/>
            <person name="George R.A."/>
            <person name="Lewis S.E."/>
            <person name="Richards S."/>
            <person name="Ashburner M."/>
            <person name="Henderson S.N."/>
            <person name="Sutton G.G."/>
            <person name="Wortman J.R."/>
            <person name="Yandell M.D."/>
            <person name="Zhang Q."/>
            <person name="Chen L.X."/>
            <person name="Brandon R.C."/>
            <person name="Rogers Y.-H.C."/>
            <person name="Blazej R.G."/>
            <person name="Champe M."/>
            <person name="Pfeiffer B.D."/>
            <person name="Wan K.H."/>
            <person name="Doyle C."/>
            <person name="Baxter E.G."/>
            <person name="Helt G."/>
            <person name="Nelson C.R."/>
            <person name="Miklos G.L.G."/>
            <person name="Abril J.F."/>
            <person name="Agbayani A."/>
            <person name="An H.-J."/>
            <person name="Andrews-Pfannkoch C."/>
            <person name="Baldwin D."/>
            <person name="Ballew R.M."/>
            <person name="Basu A."/>
            <person name="Baxendale J."/>
            <person name="Bayraktaroglu L."/>
            <person name="Beasley E.M."/>
            <person name="Beeson K.Y."/>
            <person name="Benos P.V."/>
            <person name="Berman B.P."/>
            <person name="Bhandari D."/>
            <person name="Bolshakov S."/>
            <person name="Borkova D."/>
            <person name="Botchan M.R."/>
            <person name="Bouck J."/>
            <person name="Brokstein P."/>
            <person name="Brottier P."/>
            <person name="Burtis K.C."/>
            <person name="Busam D.A."/>
            <person name="Butler H."/>
            <person name="Cadieu E."/>
            <person name="Center A."/>
            <person name="Chandra I."/>
            <person name="Cherry J.M."/>
            <person name="Cawley S."/>
            <person name="Dahlke C."/>
            <person name="Davenport L.B."/>
            <person name="Davies P."/>
            <person name="de Pablos B."/>
            <person name="Delcher A."/>
            <person name="Deng Z."/>
            <person name="Mays A.D."/>
            <person name="Dew I."/>
            <person name="Dietz S.M."/>
            <person name="Dodson K."/>
            <person name="Doup L.E."/>
            <person name="Downes M."/>
            <person name="Dugan-Rocha S."/>
            <person name="Dunkov B.C."/>
            <person name="Dunn P."/>
            <person name="Durbin K.J."/>
            <person name="Evangelista C.C."/>
            <person name="Ferraz C."/>
            <person name="Ferriera S."/>
            <person name="Fleischmann W."/>
            <person name="Fosler C."/>
            <person name="Gabrielian A.E."/>
            <person name="Garg N.S."/>
            <person name="Gelbart W.M."/>
            <person name="Glasser K."/>
            <person name="Glodek A."/>
            <person name="Gong F."/>
            <person name="Gorrell J.H."/>
            <person name="Gu Z."/>
            <person name="Guan P."/>
            <person name="Harris M."/>
            <person name="Harris N.L."/>
            <person name="Harvey D.A."/>
            <person name="Heiman T.J."/>
            <person name="Hernandez J.R."/>
            <person name="Houck J."/>
            <person name="Hostin D."/>
            <person name="Houston K.A."/>
            <person name="Howland T.J."/>
            <person name="Wei M.-H."/>
            <person name="Ibegwam C."/>
            <person name="Jalali M."/>
            <person name="Kalush F."/>
            <person name="Karpen G.H."/>
            <person name="Ke Z."/>
            <person name="Kennison J.A."/>
            <person name="Ketchum K.A."/>
            <person name="Kimmel B.E."/>
            <person name="Kodira C.D."/>
            <person name="Kraft C.L."/>
            <person name="Kravitz S."/>
            <person name="Kulp D."/>
            <person name="Lai Z."/>
            <person name="Lasko P."/>
            <person name="Lei Y."/>
            <person name="Levitsky A.A."/>
            <person name="Li J.H."/>
            <person name="Li Z."/>
            <person name="Liang Y."/>
            <person name="Lin X."/>
            <person name="Liu X."/>
            <person name="Mattei B."/>
            <person name="McIntosh T.C."/>
            <person name="McLeod M.P."/>
            <person name="McPherson D."/>
            <person name="Merkulov G."/>
            <person name="Milshina N.V."/>
            <person name="Mobarry C."/>
            <person name="Morris J."/>
            <person name="Moshrefi A."/>
            <person name="Mount S.M."/>
            <person name="Moy M."/>
            <person name="Murphy B."/>
            <person name="Murphy L."/>
            <person name="Muzny D.M."/>
            <person name="Nelson D.L."/>
            <person name="Nelson D.R."/>
            <person name="Nelson K.A."/>
            <person name="Nixon K."/>
            <person name="Nusskern D.R."/>
            <person name="Pacleb J.M."/>
            <person name="Palazzolo M."/>
            <person name="Pittman G.S."/>
            <person name="Pan S."/>
            <person name="Pollard J."/>
            <person name="Puri V."/>
            <person name="Reese M.G."/>
            <person name="Reinert K."/>
            <person name="Remington K."/>
            <person name="Saunders R.D.C."/>
            <person name="Scheeler F."/>
            <person name="Shen H."/>
            <person name="Shue B.C."/>
            <person name="Siden-Kiamos I."/>
            <person name="Simpson M."/>
            <person name="Skupski M.P."/>
            <person name="Smith T.J."/>
            <person name="Spier E."/>
            <person name="Spradling A.C."/>
            <person name="Stapleton M."/>
            <person name="Strong R."/>
            <person name="Sun E."/>
            <person name="Svirskas R."/>
            <person name="Tector C."/>
            <person name="Turner R."/>
            <person name="Venter E."/>
            <person name="Wang A.H."/>
            <person name="Wang X."/>
            <person name="Wang Z.-Y."/>
            <person name="Wassarman D.A."/>
            <person name="Weinstock G.M."/>
            <person name="Weissenbach J."/>
            <person name="Williams S.M."/>
            <person name="Woodage T."/>
            <person name="Worley K.C."/>
            <person name="Wu D."/>
            <person name="Yang S."/>
            <person name="Yao Q.A."/>
            <person name="Ye J."/>
            <person name="Yeh R.-F."/>
            <person name="Zaveri J.S."/>
            <person name="Zhan M."/>
            <person name="Zhang G."/>
            <person name="Zhao Q."/>
            <person name="Zheng L."/>
            <person name="Zheng X.H."/>
            <person name="Zhong F.N."/>
            <person name="Zhong W."/>
            <person name="Zhou X."/>
            <person name="Zhu S.C."/>
            <person name="Zhu X."/>
            <person name="Smith H.O."/>
            <person name="Gibbs R.A."/>
            <person name="Myers E.W."/>
            <person name="Rubin G.M."/>
            <person name="Venter J.C."/>
        </authorList>
    </citation>
    <scope>NUCLEOTIDE SEQUENCE [LARGE SCALE GENOMIC DNA]</scope>
    <source>
        <strain>Berkeley</strain>
    </source>
</reference>
<reference key="5">
    <citation type="journal article" date="2002" name="Genome Biol.">
        <title>Annotation of the Drosophila melanogaster euchromatic genome: a systematic review.</title>
        <authorList>
            <person name="Misra S."/>
            <person name="Crosby M.A."/>
            <person name="Mungall C.J."/>
            <person name="Matthews B.B."/>
            <person name="Campbell K.S."/>
            <person name="Hradecky P."/>
            <person name="Huang Y."/>
            <person name="Kaminker J.S."/>
            <person name="Millburn G.H."/>
            <person name="Prochnik S.E."/>
            <person name="Smith C.D."/>
            <person name="Tupy J.L."/>
            <person name="Whitfield E.J."/>
            <person name="Bayraktaroglu L."/>
            <person name="Berman B.P."/>
            <person name="Bettencourt B.R."/>
            <person name="Celniker S.E."/>
            <person name="de Grey A.D.N.J."/>
            <person name="Drysdale R.A."/>
            <person name="Harris N.L."/>
            <person name="Richter J."/>
            <person name="Russo S."/>
            <person name="Schroeder A.J."/>
            <person name="Shu S.Q."/>
            <person name="Stapleton M."/>
            <person name="Yamada C."/>
            <person name="Ashburner M."/>
            <person name="Gelbart W.M."/>
            <person name="Rubin G.M."/>
            <person name="Lewis S.E."/>
        </authorList>
    </citation>
    <scope>GENOME REANNOTATION</scope>
    <source>
        <strain>Berkeley</strain>
    </source>
</reference>
<reference key="6">
    <citation type="journal article" date="2002" name="Genome Biol.">
        <title>A Drosophila full-length cDNA resource.</title>
        <authorList>
            <person name="Stapleton M."/>
            <person name="Carlson J.W."/>
            <person name="Brokstein P."/>
            <person name="Yu C."/>
            <person name="Champe M."/>
            <person name="George R.A."/>
            <person name="Guarin H."/>
            <person name="Kronmiller B."/>
            <person name="Pacleb J.M."/>
            <person name="Park S."/>
            <person name="Wan K.H."/>
            <person name="Rubin G.M."/>
            <person name="Celniker S.E."/>
        </authorList>
    </citation>
    <scope>NUCLEOTIDE SEQUENCE [LARGE SCALE MRNA]</scope>
    <source>
        <strain>Berkeley</strain>
        <tissue>Larva</tissue>
        <tissue>Pupae</tissue>
    </source>
</reference>
<reference key="7">
    <citation type="journal article" date="1996" name="Nucleic Acids Res.">
        <title>Drosophila Rrp1 3'-exonuclease: demonstration of DNA sequence dependence and DNA strand specificity.</title>
        <authorList>
            <person name="Sander M."/>
            <person name="Benhaim D."/>
        </authorList>
    </citation>
    <scope>FUNCTION</scope>
    <scope>CATALYTIC ACTIVITY</scope>
    <scope>COFACTOR</scope>
    <scope>SUBCELLULAR LOCATION</scope>
</reference>
<reference key="8">
    <citation type="journal article" date="2006" name="J. Biol. Chem.">
        <title>Drosophila DNA polymerase zeta interacts with recombination repair protein 1, the Drosophila homologue of human abasic endonuclease 1.</title>
        <authorList>
            <person name="Takeuchi R."/>
            <person name="Ruike T."/>
            <person name="Nakamura R."/>
            <person name="Shimanouchi K."/>
            <person name="Kanai Y."/>
            <person name="Abe Y."/>
            <person name="Ihara A."/>
            <person name="Sakaguchi K."/>
        </authorList>
    </citation>
    <scope>FUNCTION</scope>
    <scope>CATALYTIC ACTIVITY</scope>
    <scope>COFACTOR</scope>
    <scope>INTERACTION WITH POLZ1 AND POLZ2</scope>
    <scope>DEVELOPMENTAL STAGE</scope>
</reference>
<reference key="9">
    <citation type="journal article" date="2008" name="J. Proteome Res.">
        <title>Phosphoproteome analysis of Drosophila melanogaster embryos.</title>
        <authorList>
            <person name="Zhai B."/>
            <person name="Villen J."/>
            <person name="Beausoleil S.A."/>
            <person name="Mintseris J."/>
            <person name="Gygi S.P."/>
        </authorList>
    </citation>
    <scope>PHOSPHORYLATION [LARGE SCALE ANALYSIS] AT THR-133; THR-140; SER-142 AND SER-258</scope>
    <scope>IDENTIFICATION BY MASS SPECTROMETRY</scope>
    <source>
        <tissue>Embryo</tissue>
    </source>
</reference>
<organism>
    <name type="scientific">Drosophila melanogaster</name>
    <name type="common">Fruit fly</name>
    <dbReference type="NCBI Taxonomy" id="7227"/>
    <lineage>
        <taxon>Eukaryota</taxon>
        <taxon>Metazoa</taxon>
        <taxon>Ecdysozoa</taxon>
        <taxon>Arthropoda</taxon>
        <taxon>Hexapoda</taxon>
        <taxon>Insecta</taxon>
        <taxon>Pterygota</taxon>
        <taxon>Neoptera</taxon>
        <taxon>Endopterygota</taxon>
        <taxon>Diptera</taxon>
        <taxon>Brachycera</taxon>
        <taxon>Muscomorpha</taxon>
        <taxon>Ephydroidea</taxon>
        <taxon>Drosophilidae</taxon>
        <taxon>Drosophila</taxon>
        <taxon>Sophophora</taxon>
    </lineage>
</organism>
<feature type="chain" id="PRO_0000200017" description="Recombination repair protein 1">
    <location>
        <begin position="1"/>
        <end position="679"/>
    </location>
</feature>
<feature type="region of interest" description="Disordered" evidence="4">
    <location>
        <begin position="1"/>
        <end position="407"/>
    </location>
</feature>
<feature type="region of interest" description="AP endonuclease">
    <location>
        <begin position="428"/>
        <end position="679"/>
    </location>
</feature>
<feature type="compositionally biased region" description="Basic residues" evidence="4">
    <location>
        <begin position="45"/>
        <end position="55"/>
    </location>
</feature>
<feature type="compositionally biased region" description="Basic and acidic residues" evidence="4">
    <location>
        <begin position="106"/>
        <end position="116"/>
    </location>
</feature>
<feature type="compositionally biased region" description="Basic and acidic residues" evidence="4">
    <location>
        <begin position="179"/>
        <end position="189"/>
    </location>
</feature>
<feature type="compositionally biased region" description="Basic and acidic residues" evidence="4">
    <location>
        <begin position="203"/>
        <end position="214"/>
    </location>
</feature>
<feature type="compositionally biased region" description="Basic and acidic residues" evidence="4">
    <location>
        <begin position="312"/>
        <end position="347"/>
    </location>
</feature>
<feature type="active site" evidence="1">
    <location>
        <position position="533"/>
    </location>
</feature>
<feature type="active site" description="Proton donor/acceptor" evidence="1">
    <location>
        <position position="572"/>
    </location>
</feature>
<feature type="binding site" evidence="1">
    <location>
        <position position="461"/>
    </location>
    <ligand>
        <name>Mg(2+)</name>
        <dbReference type="ChEBI" id="CHEBI:18420"/>
        <label>1</label>
    </ligand>
</feature>
<feature type="binding site" evidence="1">
    <location>
        <position position="572"/>
    </location>
    <ligand>
        <name>Mg(2+)</name>
        <dbReference type="ChEBI" id="CHEBI:18420"/>
        <label>2</label>
    </ligand>
</feature>
<feature type="binding site" evidence="1">
    <location>
        <position position="574"/>
    </location>
    <ligand>
        <name>Mg(2+)</name>
        <dbReference type="ChEBI" id="CHEBI:18420"/>
        <label>2</label>
    </ligand>
</feature>
<feature type="binding site" evidence="1">
    <location>
        <position position="669"/>
    </location>
    <ligand>
        <name>Mg(2+)</name>
        <dbReference type="ChEBI" id="CHEBI:18420"/>
        <label>1</label>
    </ligand>
</feature>
<feature type="site" description="Transition state stabilizer" evidence="1">
    <location>
        <position position="574"/>
    </location>
</feature>
<feature type="site" description="Important for catalytic activity" evidence="1">
    <location>
        <position position="644"/>
    </location>
</feature>
<feature type="site" description="Interaction with DNA substrate" evidence="1">
    <location>
        <position position="670"/>
    </location>
</feature>
<feature type="modified residue" description="Phosphothreonine" evidence="7">
    <location>
        <position position="133"/>
    </location>
</feature>
<feature type="modified residue" description="Phosphothreonine" evidence="7">
    <location>
        <position position="140"/>
    </location>
</feature>
<feature type="modified residue" description="Phosphoserine" evidence="7">
    <location>
        <position position="142"/>
    </location>
</feature>
<feature type="modified residue" description="Phosphoserine" evidence="7">
    <location>
        <position position="258"/>
    </location>
</feature>
<feature type="sequence conflict" description="In Ref. 1; no nucleotide entry, 2; AAA62769 and 3; AAC27621." evidence="10" ref="1 2 3">
    <original>A</original>
    <variation>V</variation>
    <location>
        <position position="76"/>
    </location>
</feature>
<dbReference type="EC" id="3.1.11.2" evidence="5 6 8"/>
<dbReference type="EMBL" id="M62472">
    <property type="protein sequence ID" value="AAA62769.1"/>
    <property type="molecule type" value="mRNA"/>
</dbReference>
<dbReference type="EMBL" id="AF073994">
    <property type="protein sequence ID" value="AAC27621.1"/>
    <property type="molecule type" value="Genomic_DNA"/>
</dbReference>
<dbReference type="EMBL" id="AE014134">
    <property type="protein sequence ID" value="AAF51175.1"/>
    <property type="molecule type" value="Genomic_DNA"/>
</dbReference>
<dbReference type="EMBL" id="AY118605">
    <property type="protein sequence ID" value="AAM49974.1"/>
    <property type="molecule type" value="mRNA"/>
</dbReference>
<dbReference type="PIR" id="S28366">
    <property type="entry name" value="S28366"/>
</dbReference>
<dbReference type="RefSeq" id="NP_476841.1">
    <property type="nucleotide sequence ID" value="NM_057493.4"/>
</dbReference>
<dbReference type="SMR" id="P27864"/>
<dbReference type="BioGRID" id="59720">
    <property type="interactions" value="3"/>
</dbReference>
<dbReference type="FunCoup" id="P27864">
    <property type="interactions" value="224"/>
</dbReference>
<dbReference type="IntAct" id="P27864">
    <property type="interactions" value="21"/>
</dbReference>
<dbReference type="STRING" id="7227.FBpp0288680"/>
<dbReference type="GlyGen" id="P27864">
    <property type="glycosylation" value="1 site"/>
</dbReference>
<dbReference type="iPTMnet" id="P27864"/>
<dbReference type="PaxDb" id="7227-FBpp0288680"/>
<dbReference type="DNASU" id="33500"/>
<dbReference type="EnsemblMetazoa" id="FBtr0077678">
    <property type="protein sequence ID" value="FBpp0077362"/>
    <property type="gene ID" value="FBgn0004584"/>
</dbReference>
<dbReference type="GeneID" id="33500"/>
<dbReference type="KEGG" id="dme:Dmel_CG3178"/>
<dbReference type="AGR" id="FB:FBgn0004584"/>
<dbReference type="CTD" id="8568"/>
<dbReference type="FlyBase" id="FBgn0004584">
    <property type="gene designation" value="Rrp1"/>
</dbReference>
<dbReference type="VEuPathDB" id="VectorBase:FBgn0004584"/>
<dbReference type="eggNOG" id="KOG1294">
    <property type="taxonomic scope" value="Eukaryota"/>
</dbReference>
<dbReference type="eggNOG" id="KOG2992">
    <property type="taxonomic scope" value="Eukaryota"/>
</dbReference>
<dbReference type="GeneTree" id="ENSGT00530000063540"/>
<dbReference type="InParanoid" id="P27864"/>
<dbReference type="OrthoDB" id="498125at2759"/>
<dbReference type="PhylomeDB" id="P27864"/>
<dbReference type="Reactome" id="R-DME-110357">
    <property type="pathway name" value="Displacement of DNA glycosylase by APEX1"/>
</dbReference>
<dbReference type="Reactome" id="R-DME-110373">
    <property type="pathway name" value="Resolution of AP sites via the multiple-nucleotide patch replacement pathway"/>
</dbReference>
<dbReference type="Reactome" id="R-DME-5651801">
    <property type="pathway name" value="PCNA-Dependent Long Patch Base Excision Repair"/>
</dbReference>
<dbReference type="Reactome" id="R-DME-73933">
    <property type="pathway name" value="Resolution of Abasic Sites (AP sites)"/>
</dbReference>
<dbReference type="BioGRID-ORCS" id="33500">
    <property type="hits" value="0 hits in 3 CRISPR screens"/>
</dbReference>
<dbReference type="ChiTaRS" id="Rrp1">
    <property type="organism name" value="fly"/>
</dbReference>
<dbReference type="GenomeRNAi" id="33500"/>
<dbReference type="PRO" id="PR:P27864"/>
<dbReference type="Proteomes" id="UP000000803">
    <property type="component" value="Chromosome 2L"/>
</dbReference>
<dbReference type="Bgee" id="FBgn0004584">
    <property type="expression patterns" value="Expressed in eye disc (Drosophila) and 89 other cell types or tissues"/>
</dbReference>
<dbReference type="ExpressionAtlas" id="P27864">
    <property type="expression patterns" value="baseline and differential"/>
</dbReference>
<dbReference type="GO" id="GO:0005634">
    <property type="term" value="C:nucleus"/>
    <property type="evidence" value="ECO:0000318"/>
    <property type="project" value="GO_Central"/>
</dbReference>
<dbReference type="GO" id="GO:0008408">
    <property type="term" value="F:3'-5' exonuclease activity"/>
    <property type="evidence" value="ECO:0000314"/>
    <property type="project" value="FlyBase"/>
</dbReference>
<dbReference type="GO" id="GO:0052720">
    <property type="term" value="F:class II DNA-(apurinic or apyrimidinic site) endonuclease activity"/>
    <property type="evidence" value="ECO:0000314"/>
    <property type="project" value="FlyBase"/>
</dbReference>
<dbReference type="GO" id="GO:0003677">
    <property type="term" value="F:DNA binding"/>
    <property type="evidence" value="ECO:0007669"/>
    <property type="project" value="InterPro"/>
</dbReference>
<dbReference type="GO" id="GO:0070182">
    <property type="term" value="F:DNA polymerase binding"/>
    <property type="evidence" value="ECO:0000353"/>
    <property type="project" value="FlyBase"/>
</dbReference>
<dbReference type="GO" id="GO:0003906">
    <property type="term" value="F:DNA-(apurinic or apyrimidinic site) endonuclease activity"/>
    <property type="evidence" value="ECO:0000314"/>
    <property type="project" value="FlyBase"/>
</dbReference>
<dbReference type="GO" id="GO:0008311">
    <property type="term" value="F:double-stranded DNA 3'-5' DNA exonuclease activity"/>
    <property type="evidence" value="ECO:0000318"/>
    <property type="project" value="GO_Central"/>
</dbReference>
<dbReference type="GO" id="GO:0046872">
    <property type="term" value="F:metal ion binding"/>
    <property type="evidence" value="ECO:0007669"/>
    <property type="project" value="UniProtKB-KW"/>
</dbReference>
<dbReference type="GO" id="GO:0008081">
    <property type="term" value="F:phosphoric diester hydrolase activity"/>
    <property type="evidence" value="ECO:0000318"/>
    <property type="project" value="GO_Central"/>
</dbReference>
<dbReference type="GO" id="GO:0006284">
    <property type="term" value="P:base-excision repair"/>
    <property type="evidence" value="ECO:0000318"/>
    <property type="project" value="GO_Central"/>
</dbReference>
<dbReference type="CDD" id="cd09087">
    <property type="entry name" value="Ape1-like_AP-endo"/>
    <property type="match status" value="1"/>
</dbReference>
<dbReference type="FunFam" id="3.60.10.10:FF:000009">
    <property type="entry name" value="DNA-(apurinic or apyrimidinic site) lyase"/>
    <property type="match status" value="1"/>
</dbReference>
<dbReference type="Gene3D" id="3.60.10.10">
    <property type="entry name" value="Endonuclease/exonuclease/phosphatase"/>
    <property type="match status" value="1"/>
</dbReference>
<dbReference type="InterPro" id="IPR004808">
    <property type="entry name" value="AP_endonuc_1"/>
</dbReference>
<dbReference type="InterPro" id="IPR020847">
    <property type="entry name" value="AP_endonuclease_F1_BS"/>
</dbReference>
<dbReference type="InterPro" id="IPR020848">
    <property type="entry name" value="AP_endonuclease_F1_CS"/>
</dbReference>
<dbReference type="InterPro" id="IPR036691">
    <property type="entry name" value="Endo/exonu/phosph_ase_sf"/>
</dbReference>
<dbReference type="InterPro" id="IPR005135">
    <property type="entry name" value="Endo/exonuclease/phosphatase"/>
</dbReference>
<dbReference type="NCBIfam" id="TIGR00195">
    <property type="entry name" value="exoDNase_III"/>
    <property type="match status" value="1"/>
</dbReference>
<dbReference type="NCBIfam" id="TIGR00633">
    <property type="entry name" value="xth"/>
    <property type="match status" value="1"/>
</dbReference>
<dbReference type="PANTHER" id="PTHR22748">
    <property type="entry name" value="AP ENDONUCLEASE"/>
    <property type="match status" value="1"/>
</dbReference>
<dbReference type="PANTHER" id="PTHR22748:SF6">
    <property type="entry name" value="DNA-(APURINIC OR APYRIMIDINIC SITE) ENDONUCLEASE"/>
    <property type="match status" value="1"/>
</dbReference>
<dbReference type="Pfam" id="PF03372">
    <property type="entry name" value="Exo_endo_phos"/>
    <property type="match status" value="1"/>
</dbReference>
<dbReference type="SUPFAM" id="SSF56219">
    <property type="entry name" value="DNase I-like"/>
    <property type="match status" value="1"/>
</dbReference>
<dbReference type="PROSITE" id="PS00726">
    <property type="entry name" value="AP_NUCLEASE_F1_1"/>
    <property type="match status" value="1"/>
</dbReference>
<dbReference type="PROSITE" id="PS00727">
    <property type="entry name" value="AP_NUCLEASE_F1_2"/>
    <property type="match status" value="1"/>
</dbReference>
<dbReference type="PROSITE" id="PS00728">
    <property type="entry name" value="AP_NUCLEASE_F1_3"/>
    <property type="match status" value="1"/>
</dbReference>
<dbReference type="PROSITE" id="PS51435">
    <property type="entry name" value="AP_NUCLEASE_F1_4"/>
    <property type="match status" value="1"/>
</dbReference>
<proteinExistence type="evidence at protein level"/>
<name>RRP1_DROME</name>
<protein>
    <recommendedName>
        <fullName evidence="9">Recombination repair protein 1</fullName>
    </recommendedName>
    <alternativeName>
        <fullName evidence="2">DNA-(apurinic or apyrimidinic site) endonuclease</fullName>
        <ecNumber evidence="5 6 8">3.1.11.2</ecNumber>
    </alternativeName>
</protein>
<accession>P27864</accession>
<accession>Q540Y1</accession>
<accession>Q9VQJ4</accession>
<evidence type="ECO:0000250" key="1"/>
<evidence type="ECO:0000250" key="2">
    <source>
        <dbReference type="UniProtKB" id="P27695"/>
    </source>
</evidence>
<evidence type="ECO:0000255" key="3">
    <source>
        <dbReference type="PROSITE-ProRule" id="PRU00764"/>
    </source>
</evidence>
<evidence type="ECO:0000256" key="4">
    <source>
        <dbReference type="SAM" id="MobiDB-lite"/>
    </source>
</evidence>
<evidence type="ECO:0000269" key="5">
    <source>
    </source>
</evidence>
<evidence type="ECO:0000269" key="6">
    <source>
    </source>
</evidence>
<evidence type="ECO:0000269" key="7">
    <source>
    </source>
</evidence>
<evidence type="ECO:0000269" key="8">
    <source>
    </source>
</evidence>
<evidence type="ECO:0000303" key="9">
    <source>
    </source>
</evidence>
<evidence type="ECO:0000305" key="10"/>
<evidence type="ECO:0000312" key="11">
    <source>
        <dbReference type="FlyBase" id="FBgn0004584"/>
    </source>
</evidence>
<keyword id="KW-0227">DNA damage</keyword>
<keyword id="KW-0234">DNA repair</keyword>
<keyword id="KW-0378">Hydrolase</keyword>
<keyword id="KW-0460">Magnesium</keyword>
<keyword id="KW-0479">Metal-binding</keyword>
<keyword id="KW-0539">Nucleus</keyword>
<keyword id="KW-0597">Phosphoprotein</keyword>
<keyword id="KW-1185">Reference proteome</keyword>